<comment type="function">
    <text evidence="1">Binds directly to 16S ribosomal RNA.</text>
</comment>
<comment type="similarity">
    <text evidence="1">Belongs to the bacterial ribosomal protein bS20 family.</text>
</comment>
<sequence>MANTTSAKKATRKIARRTAVNKARRSRVRTFVRQVEEAIASGDQAAAAAALKAAQPELMRAATKGVVHANTASRKVSRLAQRVKALSA</sequence>
<name>RS20_SINFN</name>
<dbReference type="EMBL" id="CP001389">
    <property type="protein sequence ID" value="ACP27437.1"/>
    <property type="molecule type" value="Genomic_DNA"/>
</dbReference>
<dbReference type="RefSeq" id="WP_012710179.1">
    <property type="nucleotide sequence ID" value="NC_012587.1"/>
</dbReference>
<dbReference type="RefSeq" id="YP_002828190.1">
    <property type="nucleotide sequence ID" value="NC_012587.1"/>
</dbReference>
<dbReference type="SMR" id="C3MCY9"/>
<dbReference type="STRING" id="394.NGR_c37160"/>
<dbReference type="KEGG" id="rhi:NGR_c37160"/>
<dbReference type="PATRIC" id="fig|394.7.peg.6571"/>
<dbReference type="eggNOG" id="COG0268">
    <property type="taxonomic scope" value="Bacteria"/>
</dbReference>
<dbReference type="HOGENOM" id="CLU_160655_3_0_5"/>
<dbReference type="OrthoDB" id="9807974at2"/>
<dbReference type="Proteomes" id="UP000001054">
    <property type="component" value="Chromosome"/>
</dbReference>
<dbReference type="GO" id="GO:0005829">
    <property type="term" value="C:cytosol"/>
    <property type="evidence" value="ECO:0007669"/>
    <property type="project" value="TreeGrafter"/>
</dbReference>
<dbReference type="GO" id="GO:0015935">
    <property type="term" value="C:small ribosomal subunit"/>
    <property type="evidence" value="ECO:0007669"/>
    <property type="project" value="TreeGrafter"/>
</dbReference>
<dbReference type="GO" id="GO:0070181">
    <property type="term" value="F:small ribosomal subunit rRNA binding"/>
    <property type="evidence" value="ECO:0007669"/>
    <property type="project" value="TreeGrafter"/>
</dbReference>
<dbReference type="GO" id="GO:0003735">
    <property type="term" value="F:structural constituent of ribosome"/>
    <property type="evidence" value="ECO:0007669"/>
    <property type="project" value="InterPro"/>
</dbReference>
<dbReference type="GO" id="GO:0006412">
    <property type="term" value="P:translation"/>
    <property type="evidence" value="ECO:0007669"/>
    <property type="project" value="UniProtKB-UniRule"/>
</dbReference>
<dbReference type="FunFam" id="1.20.58.110:FF:000001">
    <property type="entry name" value="30S ribosomal protein S20"/>
    <property type="match status" value="1"/>
</dbReference>
<dbReference type="Gene3D" id="1.20.58.110">
    <property type="entry name" value="Ribosomal protein S20"/>
    <property type="match status" value="1"/>
</dbReference>
<dbReference type="HAMAP" id="MF_00500">
    <property type="entry name" value="Ribosomal_bS20"/>
    <property type="match status" value="1"/>
</dbReference>
<dbReference type="InterPro" id="IPR002583">
    <property type="entry name" value="Ribosomal_bS20"/>
</dbReference>
<dbReference type="InterPro" id="IPR036510">
    <property type="entry name" value="Ribosomal_bS20_sf"/>
</dbReference>
<dbReference type="NCBIfam" id="TIGR00029">
    <property type="entry name" value="S20"/>
    <property type="match status" value="1"/>
</dbReference>
<dbReference type="PANTHER" id="PTHR33398">
    <property type="entry name" value="30S RIBOSOMAL PROTEIN S20"/>
    <property type="match status" value="1"/>
</dbReference>
<dbReference type="PANTHER" id="PTHR33398:SF1">
    <property type="entry name" value="SMALL RIBOSOMAL SUBUNIT PROTEIN BS20C"/>
    <property type="match status" value="1"/>
</dbReference>
<dbReference type="Pfam" id="PF01649">
    <property type="entry name" value="Ribosomal_S20p"/>
    <property type="match status" value="1"/>
</dbReference>
<dbReference type="SUPFAM" id="SSF46992">
    <property type="entry name" value="Ribosomal protein S20"/>
    <property type="match status" value="1"/>
</dbReference>
<proteinExistence type="inferred from homology"/>
<reference key="1">
    <citation type="journal article" date="2009" name="Appl. Environ. Microbiol.">
        <title>Rhizobium sp. strain NGR234 possesses a remarkable number of secretion systems.</title>
        <authorList>
            <person name="Schmeisser C."/>
            <person name="Liesegang H."/>
            <person name="Krysciak D."/>
            <person name="Bakkou N."/>
            <person name="Le Quere A."/>
            <person name="Wollherr A."/>
            <person name="Heinemeyer I."/>
            <person name="Morgenstern B."/>
            <person name="Pommerening-Roeser A."/>
            <person name="Flores M."/>
            <person name="Palacios R."/>
            <person name="Brenner S."/>
            <person name="Gottschalk G."/>
            <person name="Schmitz R.A."/>
            <person name="Broughton W.J."/>
            <person name="Perret X."/>
            <person name="Strittmatter A.W."/>
            <person name="Streit W.R."/>
        </authorList>
    </citation>
    <scope>NUCLEOTIDE SEQUENCE [LARGE SCALE GENOMIC DNA]</scope>
    <source>
        <strain>NBRC 101917 / NGR234</strain>
    </source>
</reference>
<evidence type="ECO:0000255" key="1">
    <source>
        <dbReference type="HAMAP-Rule" id="MF_00500"/>
    </source>
</evidence>
<evidence type="ECO:0000256" key="2">
    <source>
        <dbReference type="SAM" id="MobiDB-lite"/>
    </source>
</evidence>
<evidence type="ECO:0000305" key="3"/>
<feature type="chain" id="PRO_1000194259" description="Small ribosomal subunit protein bS20">
    <location>
        <begin position="1"/>
        <end position="88"/>
    </location>
</feature>
<feature type="region of interest" description="Disordered" evidence="2">
    <location>
        <begin position="1"/>
        <end position="21"/>
    </location>
</feature>
<protein>
    <recommendedName>
        <fullName evidence="1">Small ribosomal subunit protein bS20</fullName>
    </recommendedName>
    <alternativeName>
        <fullName evidence="3">30S ribosomal protein S20</fullName>
    </alternativeName>
</protein>
<organism>
    <name type="scientific">Sinorhizobium fredii (strain NBRC 101917 / NGR234)</name>
    <dbReference type="NCBI Taxonomy" id="394"/>
    <lineage>
        <taxon>Bacteria</taxon>
        <taxon>Pseudomonadati</taxon>
        <taxon>Pseudomonadota</taxon>
        <taxon>Alphaproteobacteria</taxon>
        <taxon>Hyphomicrobiales</taxon>
        <taxon>Rhizobiaceae</taxon>
        <taxon>Sinorhizobium/Ensifer group</taxon>
        <taxon>Sinorhizobium</taxon>
    </lineage>
</organism>
<keyword id="KW-1185">Reference proteome</keyword>
<keyword id="KW-0687">Ribonucleoprotein</keyword>
<keyword id="KW-0689">Ribosomal protein</keyword>
<keyword id="KW-0694">RNA-binding</keyword>
<keyword id="KW-0699">rRNA-binding</keyword>
<accession>C3MCY9</accession>
<gene>
    <name evidence="1" type="primary">rpsT</name>
    <name type="ordered locus">NGR_c37160</name>
</gene>